<accession>Q9FK12</accession>
<sequence length="354" mass="40100">MDEYIDFRPLKYTEHKTSMTKYTKKSSEKLSGGKSLKKVSICYTDPDATDSSSDEDEEDFLFPRRRVKRFVNEITVEPSCNNVVTGVSMKDRKRLSSSSDETQSPASSRQRPNNKVSVSGQIKKFRGVRQRPWGKWAAEIRDPEQRRRIWLGTFETAEEAAVVYDNAAIRLRGPDALTNFSIPPQEEEEEEEPEPVIEEKPVIMTTPTPTTSSSESTEEDLQHLSSPTSVLNHRSEEIQQVQQPFKSAKPEPGVSNAPWWHTGFNTGLGESDDSFPLDTPFLDNYFNESPPEMSIFDQPMDQIFCENDDIFNDMLFLGGETMNIEDELTSSSIKDMGSTFSDFDDSLISDLLVA</sequence>
<dbReference type="EMBL" id="AY560878">
    <property type="protein sequence ID" value="AAT44945.1"/>
    <property type="molecule type" value="mRNA"/>
</dbReference>
<dbReference type="EMBL" id="AB013388">
    <property type="protein sequence ID" value="BAB09791.1"/>
    <property type="molecule type" value="Genomic_DNA"/>
</dbReference>
<dbReference type="EMBL" id="CP002688">
    <property type="protein sequence ID" value="AED96333.1"/>
    <property type="molecule type" value="Genomic_DNA"/>
</dbReference>
<dbReference type="EMBL" id="BT020244">
    <property type="protein sequence ID" value="AAV74238.1"/>
    <property type="molecule type" value="mRNA"/>
</dbReference>
<dbReference type="EMBL" id="BT021136">
    <property type="protein sequence ID" value="AAX22271.1"/>
    <property type="molecule type" value="mRNA"/>
</dbReference>
<dbReference type="RefSeq" id="NP_200141.1">
    <property type="nucleotide sequence ID" value="NM_124708.3"/>
</dbReference>
<dbReference type="SMR" id="Q9FK12"/>
<dbReference type="BioGRID" id="20655">
    <property type="interactions" value="48"/>
</dbReference>
<dbReference type="FunCoup" id="Q9FK12">
    <property type="interactions" value="148"/>
</dbReference>
<dbReference type="IntAct" id="Q9FK12">
    <property type="interactions" value="48"/>
</dbReference>
<dbReference type="STRING" id="3702.Q9FK12"/>
<dbReference type="GlyGen" id="Q9FK12">
    <property type="glycosylation" value="1 site"/>
</dbReference>
<dbReference type="PaxDb" id="3702-AT5G53290.1"/>
<dbReference type="ProteomicsDB" id="220447"/>
<dbReference type="EnsemblPlants" id="AT5G53290.1">
    <property type="protein sequence ID" value="AT5G53290.1"/>
    <property type="gene ID" value="AT5G53290"/>
</dbReference>
<dbReference type="GeneID" id="835410"/>
<dbReference type="Gramene" id="AT5G53290.1">
    <property type="protein sequence ID" value="AT5G53290.1"/>
    <property type="gene ID" value="AT5G53290"/>
</dbReference>
<dbReference type="KEGG" id="ath:AT5G53290"/>
<dbReference type="Araport" id="AT5G53290"/>
<dbReference type="TAIR" id="AT5G53290">
    <property type="gene designation" value="CRF3"/>
</dbReference>
<dbReference type="eggNOG" id="ENOG502R7AV">
    <property type="taxonomic scope" value="Eukaryota"/>
</dbReference>
<dbReference type="HOGENOM" id="CLU_062946_1_0_1"/>
<dbReference type="InParanoid" id="Q9FK12"/>
<dbReference type="OMA" id="MSIFDQP"/>
<dbReference type="PhylomeDB" id="Q9FK12"/>
<dbReference type="PRO" id="PR:Q9FK12"/>
<dbReference type="Proteomes" id="UP000006548">
    <property type="component" value="Chromosome 5"/>
</dbReference>
<dbReference type="ExpressionAtlas" id="Q9FK12">
    <property type="expression patterns" value="baseline and differential"/>
</dbReference>
<dbReference type="GO" id="GO:0005737">
    <property type="term" value="C:cytoplasm"/>
    <property type="evidence" value="ECO:0007669"/>
    <property type="project" value="UniProtKB-SubCell"/>
</dbReference>
<dbReference type="GO" id="GO:0005634">
    <property type="term" value="C:nucleus"/>
    <property type="evidence" value="ECO:0007669"/>
    <property type="project" value="UniProtKB-SubCell"/>
</dbReference>
<dbReference type="GO" id="GO:0003677">
    <property type="term" value="F:DNA binding"/>
    <property type="evidence" value="ECO:0007669"/>
    <property type="project" value="UniProtKB-KW"/>
</dbReference>
<dbReference type="GO" id="GO:0003700">
    <property type="term" value="F:DNA-binding transcription factor activity"/>
    <property type="evidence" value="ECO:0000250"/>
    <property type="project" value="TAIR"/>
</dbReference>
<dbReference type="GO" id="GO:0048825">
    <property type="term" value="P:cotyledon development"/>
    <property type="evidence" value="ECO:0000315"/>
    <property type="project" value="TAIR"/>
</dbReference>
<dbReference type="GO" id="GO:0009736">
    <property type="term" value="P:cytokinin-activated signaling pathway"/>
    <property type="evidence" value="ECO:0007669"/>
    <property type="project" value="UniProtKB-KW"/>
</dbReference>
<dbReference type="GO" id="GO:0009873">
    <property type="term" value="P:ethylene-activated signaling pathway"/>
    <property type="evidence" value="ECO:0007669"/>
    <property type="project" value="UniProtKB-KW"/>
</dbReference>
<dbReference type="GO" id="GO:0048366">
    <property type="term" value="P:leaf development"/>
    <property type="evidence" value="ECO:0000315"/>
    <property type="project" value="TAIR"/>
</dbReference>
<dbReference type="CDD" id="cd00018">
    <property type="entry name" value="AP2"/>
    <property type="match status" value="1"/>
</dbReference>
<dbReference type="FunFam" id="3.30.730.10:FF:000001">
    <property type="entry name" value="Ethylene-responsive transcription factor 2"/>
    <property type="match status" value="1"/>
</dbReference>
<dbReference type="Gene3D" id="3.30.730.10">
    <property type="entry name" value="AP2/ERF domain"/>
    <property type="match status" value="1"/>
</dbReference>
<dbReference type="InterPro" id="IPR001471">
    <property type="entry name" value="AP2/ERF_dom"/>
</dbReference>
<dbReference type="InterPro" id="IPR036955">
    <property type="entry name" value="AP2/ERF_dom_sf"/>
</dbReference>
<dbReference type="InterPro" id="IPR050913">
    <property type="entry name" value="AP2/ERF_ERF_subfamily"/>
</dbReference>
<dbReference type="InterPro" id="IPR016177">
    <property type="entry name" value="DNA-bd_dom_sf"/>
</dbReference>
<dbReference type="PANTHER" id="PTHR31194:SF117">
    <property type="entry name" value="ETHYLENE-RESPONSIVE TRANSCRIPTION FACTOR CRF3-RELATED"/>
    <property type="match status" value="1"/>
</dbReference>
<dbReference type="PANTHER" id="PTHR31194">
    <property type="entry name" value="SHN SHINE , DNA BINDING / TRANSCRIPTION FACTOR"/>
    <property type="match status" value="1"/>
</dbReference>
<dbReference type="Pfam" id="PF00847">
    <property type="entry name" value="AP2"/>
    <property type="match status" value="1"/>
</dbReference>
<dbReference type="PRINTS" id="PR00367">
    <property type="entry name" value="ETHRSPELEMNT"/>
</dbReference>
<dbReference type="SMART" id="SM00380">
    <property type="entry name" value="AP2"/>
    <property type="match status" value="1"/>
</dbReference>
<dbReference type="SUPFAM" id="SSF54171">
    <property type="entry name" value="DNA-binding domain"/>
    <property type="match status" value="1"/>
</dbReference>
<dbReference type="PROSITE" id="PS51032">
    <property type="entry name" value="AP2_ERF"/>
    <property type="match status" value="1"/>
</dbReference>
<protein>
    <recommendedName>
        <fullName>Ethylene-responsive transcription factor CRF3</fullName>
    </recommendedName>
    <alternativeName>
        <fullName>Protein CYTOKININ RESPONSE FACTOR 3</fullName>
    </alternativeName>
</protein>
<reference key="1">
    <citation type="submission" date="2004-02" db="EMBL/GenBank/DDBJ databases">
        <title>Molecular cloning, expression, phylogenetic and functional characterization of the Arabidopsis AP2/EREBP transcription factor family.</title>
        <authorList>
            <person name="Pan Y."/>
            <person name="Gong W."/>
            <person name="Liu D."/>
            <person name="Fu Q."/>
            <person name="Mei W.-Q."/>
            <person name="Song W.-Q."/>
            <person name="Ma L.-G."/>
            <person name="Luo J.-C."/>
            <person name="Deng X.-W."/>
            <person name="Zhu Y.-X."/>
        </authorList>
    </citation>
    <scope>NUCLEOTIDE SEQUENCE [MRNA]</scope>
</reference>
<reference key="2">
    <citation type="journal article" date="1998" name="DNA Res.">
        <title>Structural analysis of Arabidopsis thaliana chromosome 5. VI. Sequence features of the regions of 1,367,185 bp covered by 19 physically assigned P1 and TAC clones.</title>
        <authorList>
            <person name="Kotani H."/>
            <person name="Nakamura Y."/>
            <person name="Sato S."/>
            <person name="Asamizu E."/>
            <person name="Kaneko T."/>
            <person name="Miyajima N."/>
            <person name="Tabata S."/>
        </authorList>
    </citation>
    <scope>NUCLEOTIDE SEQUENCE [LARGE SCALE GENOMIC DNA]</scope>
    <source>
        <strain>cv. Columbia</strain>
    </source>
</reference>
<reference key="3">
    <citation type="journal article" date="2017" name="Plant J.">
        <title>Araport11: a complete reannotation of the Arabidopsis thaliana reference genome.</title>
        <authorList>
            <person name="Cheng C.Y."/>
            <person name="Krishnakumar V."/>
            <person name="Chan A.P."/>
            <person name="Thibaud-Nissen F."/>
            <person name="Schobel S."/>
            <person name="Town C.D."/>
        </authorList>
    </citation>
    <scope>GENOME REANNOTATION</scope>
    <source>
        <strain>cv. Columbia</strain>
    </source>
</reference>
<reference key="4">
    <citation type="submission" date="2005-03" db="EMBL/GenBank/DDBJ databases">
        <title>Arabidopsis ORF clones.</title>
        <authorList>
            <person name="Kim C.J."/>
            <person name="Chen H."/>
            <person name="Cheuk R.F."/>
            <person name="Shinn P."/>
            <person name="Ecker J.R."/>
        </authorList>
    </citation>
    <scope>NUCLEOTIDE SEQUENCE [LARGE SCALE MRNA]</scope>
    <source>
        <strain>cv. Columbia</strain>
    </source>
</reference>
<reference key="5">
    <citation type="journal article" date="2006" name="Proc. Natl. Acad. Sci. U.S.A.">
        <title>A subset of Arabidopsis AP2 transcription factors mediates cytokinin responses in concert with a two-component pathway.</title>
        <authorList>
            <person name="Rashotte A.M."/>
            <person name="Mason M.G."/>
            <person name="Hutchison C.E."/>
            <person name="Ferreira F.J."/>
            <person name="Schaller G.E."/>
            <person name="Kieber J.J."/>
        </authorList>
    </citation>
    <scope>FUNCTION</scope>
    <scope>SUBCELLULAR LOCATION</scope>
</reference>
<reference key="6">
    <citation type="journal article" date="2006" name="Plant Physiol.">
        <title>Genome-wide analysis of the ERF gene family in Arabidopsis and rice.</title>
        <authorList>
            <person name="Nakano T."/>
            <person name="Suzuki K."/>
            <person name="Fujimura T."/>
            <person name="Shinshi H."/>
        </authorList>
    </citation>
    <scope>GENE FAMILY</scope>
    <scope>NOMENCLATURE</scope>
</reference>
<name>CRF3_ARATH</name>
<gene>
    <name type="primary">CRF3</name>
    <name type="synonym">ERF065</name>
    <name type="ordered locus">At5g53290</name>
    <name type="ORF">K19E1.9</name>
</gene>
<organism>
    <name type="scientific">Arabidopsis thaliana</name>
    <name type="common">Mouse-ear cress</name>
    <dbReference type="NCBI Taxonomy" id="3702"/>
    <lineage>
        <taxon>Eukaryota</taxon>
        <taxon>Viridiplantae</taxon>
        <taxon>Streptophyta</taxon>
        <taxon>Embryophyta</taxon>
        <taxon>Tracheophyta</taxon>
        <taxon>Spermatophyta</taxon>
        <taxon>Magnoliopsida</taxon>
        <taxon>eudicotyledons</taxon>
        <taxon>Gunneridae</taxon>
        <taxon>Pentapetalae</taxon>
        <taxon>rosids</taxon>
        <taxon>malvids</taxon>
        <taxon>Brassicales</taxon>
        <taxon>Brassicaceae</taxon>
        <taxon>Camelineae</taxon>
        <taxon>Arabidopsis</taxon>
    </lineage>
</organism>
<feature type="chain" id="PRO_0000290402" description="Ethylene-responsive transcription factor CRF3">
    <location>
        <begin position="1"/>
        <end position="354"/>
    </location>
</feature>
<feature type="DNA-binding region" description="AP2/ERF" evidence="2">
    <location>
        <begin position="124"/>
        <end position="181"/>
    </location>
</feature>
<feature type="region of interest" description="Disordered" evidence="3">
    <location>
        <begin position="85"/>
        <end position="120"/>
    </location>
</feature>
<feature type="region of interest" description="Disordered" evidence="3">
    <location>
        <begin position="180"/>
        <end position="220"/>
    </location>
</feature>
<feature type="compositionally biased region" description="Polar residues" evidence="3">
    <location>
        <begin position="96"/>
        <end position="120"/>
    </location>
</feature>
<feature type="compositionally biased region" description="Acidic residues" evidence="3">
    <location>
        <begin position="185"/>
        <end position="196"/>
    </location>
</feature>
<feature type="compositionally biased region" description="Low complexity" evidence="3">
    <location>
        <begin position="205"/>
        <end position="215"/>
    </location>
</feature>
<evidence type="ECO:0000250" key="1"/>
<evidence type="ECO:0000255" key="2">
    <source>
        <dbReference type="PROSITE-ProRule" id="PRU00366"/>
    </source>
</evidence>
<evidence type="ECO:0000256" key="3">
    <source>
        <dbReference type="SAM" id="MobiDB-lite"/>
    </source>
</evidence>
<evidence type="ECO:0000269" key="4">
    <source>
    </source>
</evidence>
<evidence type="ECO:0000305" key="5"/>
<proteinExistence type="evidence at protein level"/>
<keyword id="KW-0010">Activator</keyword>
<keyword id="KW-0932">Cytokinin signaling pathway</keyword>
<keyword id="KW-0963">Cytoplasm</keyword>
<keyword id="KW-0238">DNA-binding</keyword>
<keyword id="KW-0936">Ethylene signaling pathway</keyword>
<keyword id="KW-0539">Nucleus</keyword>
<keyword id="KW-1185">Reference proteome</keyword>
<keyword id="KW-0804">Transcription</keyword>
<keyword id="KW-0805">Transcription regulation</keyword>
<comment type="function">
    <text evidence="1 4">Component of the cytokinin signaling pathway involved in cotyledons, leaves, and embryos development. Probably acts as a transcriptional activator. Binds to the GCC-box pathogenesis-related promoter element. May be involved in the regulation of gene expression by stress factors and by components of stress signal transduction pathways (By similarity).</text>
</comment>
<comment type="interaction">
    <interactant intactId="EBI-5567993">
        <id>Q9FK12</id>
    </interactant>
    <interactant intactId="EBI-5567050">
        <id>O82503</id>
        <label>CRF1</label>
    </interactant>
    <organismsDiffer>false</organismsDiffer>
    <experiments>3</experiments>
</comment>
<comment type="interaction">
    <interactant intactId="EBI-5567993">
        <id>Q9FK12</id>
    </interactant>
    <interactant intactId="EBI-5567273">
        <id>Q9SUQ2</id>
        <label>CRF2</label>
    </interactant>
    <organismsDiffer>false</organismsDiffer>
    <experiments>5</experiments>
</comment>
<comment type="interaction">
    <interactant intactId="EBI-5567993">
        <id>Q9FK12</id>
    </interactant>
    <interactant intactId="EBI-5567027">
        <id>Q9SUE3</id>
        <label>CRF4</label>
    </interactant>
    <organismsDiffer>false</organismsDiffer>
    <experiments>4</experiments>
</comment>
<comment type="interaction">
    <interactant intactId="EBI-5567993">
        <id>Q9FK12</id>
    </interactant>
    <interactant intactId="EBI-5567180">
        <id>O82339</id>
        <label>CRF5</label>
    </interactant>
    <organismsDiffer>false</organismsDiffer>
    <experiments>4</experiments>
</comment>
<comment type="interaction">
    <interactant intactId="EBI-5567993">
        <id>Q9FK12</id>
    </interactant>
    <interactant intactId="EBI-5568101">
        <id>Q9M374</id>
        <label>CRF6</label>
    </interactant>
    <organismsDiffer>false</organismsDiffer>
    <experiments>3</experiments>
</comment>
<comment type="interaction">
    <interactant intactId="EBI-5567993">
        <id>Q9FK12</id>
    </interactant>
    <interactant intactId="EBI-5568301">
        <id>Q8W4I5</id>
        <label>ERF069</label>
    </interactant>
    <organismsDiffer>false</organismsDiffer>
    <experiments>3</experiments>
</comment>
<comment type="interaction">
    <interactant intactId="EBI-5567993">
        <id>Q9FK12</id>
    </interactant>
    <interactant intactId="EBI-5568333">
        <id>Q9C995</id>
        <label>ERF070</label>
    </interactant>
    <organismsDiffer>false</organismsDiffer>
    <experiments>4</experiments>
</comment>
<comment type="subcellular location">
    <subcellularLocation>
        <location evidence="4">Cytoplasm</location>
    </subcellularLocation>
    <subcellularLocation>
        <location evidence="2 4">Nucleus</location>
    </subcellularLocation>
    <text>Relocalization from the cytoplasm into the nucleus is induced by cytokinins.</text>
</comment>
<comment type="similarity">
    <text evidence="5">Belongs to the AP2/ERF transcription factor family. ERF subfamily.</text>
</comment>